<evidence type="ECO:0000250" key="1"/>
<evidence type="ECO:0000250" key="2">
    <source>
        <dbReference type="UniProtKB" id="O15169"/>
    </source>
</evidence>
<evidence type="ECO:0000250" key="3">
    <source>
        <dbReference type="UniProtKB" id="O35625"/>
    </source>
</evidence>
<evidence type="ECO:0000250" key="4">
    <source>
        <dbReference type="UniProtKB" id="P57094"/>
    </source>
</evidence>
<evidence type="ECO:0000255" key="5">
    <source>
        <dbReference type="PROSITE-ProRule" id="PRU00069"/>
    </source>
</evidence>
<evidence type="ECO:0000255" key="6">
    <source>
        <dbReference type="PROSITE-ProRule" id="PRU00171"/>
    </source>
</evidence>
<evidence type="ECO:0000256" key="7">
    <source>
        <dbReference type="SAM" id="MobiDB-lite"/>
    </source>
</evidence>
<evidence type="ECO:0000269" key="8">
    <source>
    </source>
</evidence>
<evidence type="ECO:0007829" key="9">
    <source>
        <dbReference type="PDB" id="1QZ7"/>
    </source>
</evidence>
<accession>Q9YGY0</accession>
<organism>
    <name type="scientific">Xenopus laevis</name>
    <name type="common">African clawed frog</name>
    <dbReference type="NCBI Taxonomy" id="8355"/>
    <lineage>
        <taxon>Eukaryota</taxon>
        <taxon>Metazoa</taxon>
        <taxon>Chordata</taxon>
        <taxon>Craniata</taxon>
        <taxon>Vertebrata</taxon>
        <taxon>Euteleostomi</taxon>
        <taxon>Amphibia</taxon>
        <taxon>Batrachia</taxon>
        <taxon>Anura</taxon>
        <taxon>Pipoidea</taxon>
        <taxon>Pipidae</taxon>
        <taxon>Xenopodinae</taxon>
        <taxon>Xenopus</taxon>
        <taxon>Xenopus</taxon>
    </lineage>
</organism>
<dbReference type="EMBL" id="AF097313">
    <property type="protein sequence ID" value="AAC71036.1"/>
    <property type="molecule type" value="mRNA"/>
</dbReference>
<dbReference type="RefSeq" id="NP_001081874.1">
    <property type="nucleotide sequence ID" value="NM_001088405.1"/>
</dbReference>
<dbReference type="PDB" id="1QZ7">
    <property type="method" value="X-ray"/>
    <property type="resolution" value="2.20 A"/>
    <property type="chains" value="B=435-504"/>
</dbReference>
<dbReference type="PDBsum" id="1QZ7"/>
<dbReference type="SMR" id="Q9YGY0"/>
<dbReference type="BioGRID" id="99432">
    <property type="interactions" value="1"/>
</dbReference>
<dbReference type="DIP" id="DIP-36387N"/>
<dbReference type="ELM" id="Q9YGY0"/>
<dbReference type="IntAct" id="Q9YGY0">
    <property type="interactions" value="3"/>
</dbReference>
<dbReference type="MINT" id="Q9YGY0"/>
<dbReference type="GeneID" id="398097"/>
<dbReference type="KEGG" id="xla:398097"/>
<dbReference type="AGR" id="Xenbase:XB-GENE-17339457"/>
<dbReference type="CTD" id="398097"/>
<dbReference type="Xenbase" id="XB-GENE-17339457">
    <property type="gene designation" value="axin1.L"/>
</dbReference>
<dbReference type="OrthoDB" id="10007451at2759"/>
<dbReference type="PRO" id="PR:Q9YGY0"/>
<dbReference type="Proteomes" id="UP000186698">
    <property type="component" value="Chromosome 9_10L"/>
</dbReference>
<dbReference type="GO" id="GO:0030877">
    <property type="term" value="C:beta-catenin destruction complex"/>
    <property type="evidence" value="ECO:0000318"/>
    <property type="project" value="GO_Central"/>
</dbReference>
<dbReference type="GO" id="GO:0005737">
    <property type="term" value="C:cytoplasm"/>
    <property type="evidence" value="ECO:0000314"/>
    <property type="project" value="MGI"/>
</dbReference>
<dbReference type="GO" id="GO:0005634">
    <property type="term" value="C:nucleus"/>
    <property type="evidence" value="ECO:0000318"/>
    <property type="project" value="GO_Central"/>
</dbReference>
<dbReference type="GO" id="GO:0005886">
    <property type="term" value="C:plasma membrane"/>
    <property type="evidence" value="ECO:0000318"/>
    <property type="project" value="GO_Central"/>
</dbReference>
<dbReference type="GO" id="GO:0008013">
    <property type="term" value="F:beta-catenin binding"/>
    <property type="evidence" value="ECO:0000318"/>
    <property type="project" value="GO_Central"/>
</dbReference>
<dbReference type="GO" id="GO:0070411">
    <property type="term" value="F:I-SMAD binding"/>
    <property type="evidence" value="ECO:0000318"/>
    <property type="project" value="GO_Central"/>
</dbReference>
<dbReference type="GO" id="GO:0042802">
    <property type="term" value="F:identical protein binding"/>
    <property type="evidence" value="ECO:0000318"/>
    <property type="project" value="GO_Central"/>
</dbReference>
<dbReference type="GO" id="GO:0060090">
    <property type="term" value="F:molecular adaptor activity"/>
    <property type="evidence" value="ECO:0000318"/>
    <property type="project" value="GO_Central"/>
</dbReference>
<dbReference type="GO" id="GO:0042803">
    <property type="term" value="F:protein homodimerization activity"/>
    <property type="evidence" value="ECO:0000250"/>
    <property type="project" value="UniProtKB"/>
</dbReference>
<dbReference type="GO" id="GO:0019901">
    <property type="term" value="F:protein kinase binding"/>
    <property type="evidence" value="ECO:0000318"/>
    <property type="project" value="GO_Central"/>
</dbReference>
<dbReference type="GO" id="GO:0031625">
    <property type="term" value="F:ubiquitin protein ligase binding"/>
    <property type="evidence" value="ECO:0000318"/>
    <property type="project" value="GO_Central"/>
</dbReference>
<dbReference type="GO" id="GO:0048468">
    <property type="term" value="P:cell development"/>
    <property type="evidence" value="ECO:0000318"/>
    <property type="project" value="GO_Central"/>
</dbReference>
<dbReference type="GO" id="GO:0090090">
    <property type="term" value="P:negative regulation of canonical Wnt signaling pathway"/>
    <property type="evidence" value="ECO:0000250"/>
    <property type="project" value="UniProtKB"/>
</dbReference>
<dbReference type="GO" id="GO:0046330">
    <property type="term" value="P:positive regulation of JNK cascade"/>
    <property type="evidence" value="ECO:0000250"/>
    <property type="project" value="UniProtKB"/>
</dbReference>
<dbReference type="GO" id="GO:0032436">
    <property type="term" value="P:positive regulation of proteasomal ubiquitin-dependent protein catabolic process"/>
    <property type="evidence" value="ECO:0000318"/>
    <property type="project" value="GO_Central"/>
</dbReference>
<dbReference type="GO" id="GO:0016055">
    <property type="term" value="P:Wnt signaling pathway"/>
    <property type="evidence" value="ECO:0007669"/>
    <property type="project" value="UniProtKB-KW"/>
</dbReference>
<dbReference type="CDD" id="cd11582">
    <property type="entry name" value="Axin_TNKS_binding"/>
    <property type="match status" value="1"/>
</dbReference>
<dbReference type="CDD" id="cd08707">
    <property type="entry name" value="RGS_Axin"/>
    <property type="match status" value="1"/>
</dbReference>
<dbReference type="DisProt" id="DP00954"/>
<dbReference type="FunFam" id="1.10.167.10:FF:000003">
    <property type="entry name" value="Axin 1"/>
    <property type="match status" value="1"/>
</dbReference>
<dbReference type="FunFam" id="1.10.196.10:FF:000002">
    <property type="entry name" value="Axin 1"/>
    <property type="match status" value="1"/>
</dbReference>
<dbReference type="FunFam" id="2.40.240.130:FF:000002">
    <property type="entry name" value="Axin 1"/>
    <property type="match status" value="1"/>
</dbReference>
<dbReference type="Gene3D" id="1.10.196.10">
    <property type="match status" value="2"/>
</dbReference>
<dbReference type="Gene3D" id="2.40.240.130">
    <property type="match status" value="1"/>
</dbReference>
<dbReference type="Gene3D" id="1.10.167.10">
    <property type="entry name" value="Regulator of G-protein Signalling 4, domain 2"/>
    <property type="match status" value="1"/>
</dbReference>
<dbReference type="IDEAL" id="IID50017"/>
<dbReference type="InterPro" id="IPR043581">
    <property type="entry name" value="Axin-like"/>
</dbReference>
<dbReference type="InterPro" id="IPR014936">
    <property type="entry name" value="Axin_b-cat-bd"/>
</dbReference>
<dbReference type="InterPro" id="IPR032101">
    <property type="entry name" value="Axin_TNKS-bd"/>
</dbReference>
<dbReference type="InterPro" id="IPR001158">
    <property type="entry name" value="DIX"/>
</dbReference>
<dbReference type="InterPro" id="IPR038207">
    <property type="entry name" value="DIX_dom_sf"/>
</dbReference>
<dbReference type="InterPro" id="IPR016137">
    <property type="entry name" value="RGS"/>
</dbReference>
<dbReference type="InterPro" id="IPR036305">
    <property type="entry name" value="RGS_sf"/>
</dbReference>
<dbReference type="InterPro" id="IPR024066">
    <property type="entry name" value="RGS_subdom1/3"/>
</dbReference>
<dbReference type="InterPro" id="IPR044926">
    <property type="entry name" value="RGS_subdomain_2"/>
</dbReference>
<dbReference type="InterPro" id="IPR029071">
    <property type="entry name" value="Ubiquitin-like_domsf"/>
</dbReference>
<dbReference type="PANTHER" id="PTHR46102">
    <property type="entry name" value="AXIN"/>
    <property type="match status" value="1"/>
</dbReference>
<dbReference type="PANTHER" id="PTHR46102:SF3">
    <property type="entry name" value="AXIN-1"/>
    <property type="match status" value="1"/>
</dbReference>
<dbReference type="Pfam" id="PF16646">
    <property type="entry name" value="AXIN1_TNKS_BD"/>
    <property type="match status" value="1"/>
</dbReference>
<dbReference type="Pfam" id="PF08833">
    <property type="entry name" value="Axin_b-cat_bind"/>
    <property type="match status" value="1"/>
</dbReference>
<dbReference type="Pfam" id="PF00778">
    <property type="entry name" value="DIX"/>
    <property type="match status" value="1"/>
</dbReference>
<dbReference type="Pfam" id="PF00615">
    <property type="entry name" value="RGS"/>
    <property type="match status" value="1"/>
</dbReference>
<dbReference type="PRINTS" id="PR01301">
    <property type="entry name" value="RGSPROTEIN"/>
</dbReference>
<dbReference type="SMART" id="SM00021">
    <property type="entry name" value="DAX"/>
    <property type="match status" value="1"/>
</dbReference>
<dbReference type="SMART" id="SM00315">
    <property type="entry name" value="RGS"/>
    <property type="match status" value="1"/>
</dbReference>
<dbReference type="SUPFAM" id="SSF48097">
    <property type="entry name" value="Regulator of G-protein signaling, RGS"/>
    <property type="match status" value="1"/>
</dbReference>
<dbReference type="SUPFAM" id="SSF54236">
    <property type="entry name" value="Ubiquitin-like"/>
    <property type="match status" value="1"/>
</dbReference>
<dbReference type="PROSITE" id="PS50841">
    <property type="entry name" value="DIX"/>
    <property type="match status" value="1"/>
</dbReference>
<dbReference type="PROSITE" id="PS50132">
    <property type="entry name" value="RGS"/>
    <property type="match status" value="1"/>
</dbReference>
<keyword id="KW-0002">3D-structure</keyword>
<keyword id="KW-0013">ADP-ribosylation</keyword>
<keyword id="KW-1003">Cell membrane</keyword>
<keyword id="KW-0963">Cytoplasm</keyword>
<keyword id="KW-0217">Developmental protein</keyword>
<keyword id="KW-0472">Membrane</keyword>
<keyword id="KW-0539">Nucleus</keyword>
<keyword id="KW-0597">Phosphoprotein</keyword>
<keyword id="KW-1185">Reference proteome</keyword>
<keyword id="KW-0832">Ubl conjugation</keyword>
<keyword id="KW-0879">Wnt signaling pathway</keyword>
<sequence>MSVKGKGFPLDLGGSFTEDAPRPPVPGEEGELITTDQRPFSHTYYSLKNDGIKNETSTATPRRPDLDLGYEPEGSASPTPPYLKWAESLHSLLDDQDGIHLFRTFLQQENCADLLDFWFACSGFRKLEPNDSKVEKRLKLAKAIYKKYVLDSNGIVSRQIKPATKSFIKDCVLRQQIDPAMFDQAQMEIQSMMEDNTYPVFLKSDIYLEYTTIGGESPKNYSDQSSGSGTGKGPSGYLPTLNEDEEWRCDQGGEHERERECIPSSLFSQKLALDSSSHCAGSNRRLSDGREFRPGTWREPVNPYYVNTGYAGAPVTSANDSEQQSMSSDADTMSLTDSSVDGIPPYRLRKHYRREMQESANANGRGPLPHIPRTYHMPKDIHVDPEKFAAELISRLEGVLRDREAEQKLEERLKRVRAEEEGDDGDVSSGPSVISHKLPSGPPMHHFNSRYSETGCVGMQIRDAHEENPESILDEHVQRVMKTPGCQSPGTGRHSPKSRSPDGHLSKTLPGSLGTMQTGHGKHSSKSTAKVDSGNLHHHKHVYHHVHHHGGVKPKEQIDGESTQRVQTNFPWNVESHNYATKSRNYAESMGMAPNPMDSLAYSGKVSMLSKRNAKKADLGKSESASHEMPVVPEDSERHQKILQWIMEGEKEIIRHKKSNHSSSSAKKQPPTELARPLSIERPGAVHPWVSAQLRNVVQPSHPFIQDPTMPPNPAPNPLTQLVSKPGARLEEEEKKAAKMPQKQRLKPQKKNVSAPSQPCDNIVVAYYFCGEPIPYRTMVKGRVVTLGQFKELLTKKGNYRYYFKKVSDEFDCGVVFEEVREDDMILPIYEEKIIGQVEKID</sequence>
<feature type="chain" id="PRO_0000220892" description="Axin-1">
    <location>
        <begin position="1"/>
        <end position="842"/>
    </location>
</feature>
<feature type="domain" description="RGS" evidence="6">
    <location>
        <begin position="88"/>
        <end position="211"/>
    </location>
</feature>
<feature type="domain" description="DIX" evidence="5">
    <location>
        <begin position="760"/>
        <end position="842"/>
    </location>
</feature>
<feature type="region of interest" description="Disordered" evidence="7">
    <location>
        <begin position="1"/>
        <end position="75"/>
    </location>
</feature>
<feature type="region of interest" description="Disordered" evidence="7">
    <location>
        <begin position="218"/>
        <end position="242"/>
    </location>
</feature>
<feature type="region of interest" description="Disordered" evidence="7">
    <location>
        <begin position="277"/>
        <end position="297"/>
    </location>
</feature>
<feature type="region of interest" description="Disordered" evidence="7">
    <location>
        <begin position="316"/>
        <end position="344"/>
    </location>
</feature>
<feature type="region of interest" description="Interaction with GSK3B" evidence="1">
    <location>
        <begin position="348"/>
        <end position="433"/>
    </location>
</feature>
<feature type="region of interest" description="Disordered" evidence="7">
    <location>
        <begin position="414"/>
        <end position="451"/>
    </location>
</feature>
<feature type="region of interest" description="Interaction with beta-catenin">
    <location>
        <begin position="434"/>
        <end position="508"/>
    </location>
</feature>
<feature type="region of interest" description="Disordered" evidence="7">
    <location>
        <begin position="482"/>
        <end position="532"/>
    </location>
</feature>
<feature type="region of interest" description="Disordered" evidence="7">
    <location>
        <begin position="543"/>
        <end position="562"/>
    </location>
</feature>
<feature type="region of interest" description="Disordered" evidence="7">
    <location>
        <begin position="615"/>
        <end position="637"/>
    </location>
</feature>
<feature type="region of interest" description="Disordered" evidence="7">
    <location>
        <begin position="656"/>
        <end position="675"/>
    </location>
</feature>
<feature type="region of interest" description="Disordered" evidence="7">
    <location>
        <begin position="729"/>
        <end position="754"/>
    </location>
</feature>
<feature type="compositionally biased region" description="Polar residues" evidence="7">
    <location>
        <begin position="34"/>
        <end position="46"/>
    </location>
</feature>
<feature type="compositionally biased region" description="Polar residues" evidence="7">
    <location>
        <begin position="316"/>
        <end position="339"/>
    </location>
</feature>
<feature type="compositionally biased region" description="Basic residues" evidence="7">
    <location>
        <begin position="543"/>
        <end position="552"/>
    </location>
</feature>
<feature type="compositionally biased region" description="Basic and acidic residues" evidence="7">
    <location>
        <begin position="615"/>
        <end position="626"/>
    </location>
</feature>
<feature type="helix" evidence="9">
    <location>
        <begin position="471"/>
        <end position="480"/>
    </location>
</feature>
<gene>
    <name type="primary">axin1</name>
    <name type="synonym">axin</name>
    <name type="synonym">axn</name>
</gene>
<name>AXIN1_XENLA</name>
<reference key="1">
    <citation type="journal article" date="1999" name="Mech. Dev.">
        <title>Xenopus axin interacts with glycogen synthase kinase-3 beta and is expressed in the anterior midbrain.</title>
        <authorList>
            <person name="Hedgepeth C.M."/>
            <person name="Deardorff M.A."/>
            <person name="Klein P.S."/>
        </authorList>
    </citation>
    <scope>NUCLEOTIDE SEQUENCE [MRNA]</scope>
    <scope>DEVELOPMENTAL STAGE</scope>
</reference>
<reference key="2">
    <citation type="journal article" date="2003" name="Genes Dev.">
        <title>Crystal structure of a beta-catenin/axin complex suggests a mechanism for the beta-catenin destruction complex.</title>
        <authorList>
            <person name="Xing Y."/>
            <person name="Clements W.K."/>
            <person name="Kimelman D."/>
            <person name="Xu W."/>
        </authorList>
    </citation>
    <scope>X-RAY CRYSTALLOGRAPHY (2.2 ANGSTROMS) OF 435-504 IN COMPLEX WITH HUMAN BETA-CATENIN</scope>
</reference>
<comment type="function">
    <text evidence="2">Component of the beta-catenin destruction complex required for regulating ctnnb1 levels through phosphorylation and ubiquitination, and modulating Wnt-signaling. Controls dorsoventral patterning via two opposing effects; down-regulates ctnnb1 to inhibit the Wnt signaling pathway and ventralize embryos, but also dorsalizes embryos by activating a Wnt-independent JNK signaling pathway.</text>
</comment>
<comment type="subunit">
    <text evidence="3 4">Homodimer (By similarity). Interacts with hwa; leading to promote the tankyrase-mediated degradation of axin1 (By similarity).</text>
</comment>
<comment type="interaction">
    <interactant intactId="EBI-1037449">
        <id>Q9YGY0</id>
    </interactant>
    <interactant intactId="EBI-8069633">
        <id>P70039</id>
        <label>apc</label>
    </interactant>
    <organismsDiffer>false</organismsDiffer>
    <experiments>2</experiments>
</comment>
<comment type="interaction">
    <interactant intactId="EBI-1037449">
        <id>Q9YGY0</id>
    </interactant>
    <interactant intactId="EBI-11786127">
        <id>A0A0H5BJW1</id>
        <label>wdr26.L</label>
    </interactant>
    <organismsDiffer>false</organismsDiffer>
    <experiments>3</experiments>
</comment>
<comment type="interaction">
    <interactant intactId="EBI-1037449">
        <id>Q9YGY0</id>
    </interactant>
    <interactant intactId="EBI-491549">
        <id>P35222</id>
        <label>CTNNB1</label>
    </interactant>
    <organismsDiffer>true</organismsDiffer>
    <experiments>2</experiments>
</comment>
<comment type="subcellular location">
    <subcellularLocation>
        <location evidence="2">Cytoplasm</location>
    </subcellularLocation>
    <subcellularLocation>
        <location evidence="2">Nucleus</location>
    </subcellularLocation>
    <subcellularLocation>
        <location evidence="3">Membrane</location>
    </subcellularLocation>
    <subcellularLocation>
        <location evidence="3">Cell membrane</location>
    </subcellularLocation>
</comment>
<comment type="developmental stage">
    <text evidence="8">Weakly and ubiquitously expressed throughout early development, and highly expressed in the anterior mesencephalon adjacent to the forebrain-midbrain boundary.</text>
</comment>
<comment type="PTM">
    <text evidence="2">ADP-ribosylated by tankyrase tnks and tnks2. Poly-ADP-ribosylated protein is recognized by rnf146, followed by ubiquitination at 'Lys-48' and subsequent activation of the Wnt signaling pathway.</text>
</comment>
<comment type="PTM">
    <text evidence="2">Ubiquitinated by rnf146 when poly-ADP-ribosylated, leading to its degradation and subsequent activation of the Wnt signaling pathway.</text>
</comment>
<proteinExistence type="evidence at protein level"/>
<protein>
    <recommendedName>
        <fullName>Axin-1</fullName>
    </recommendedName>
    <alternativeName>
        <fullName>Axis inhibition protein 1</fullName>
        <shortName>xAxin</shortName>
    </alternativeName>
</protein>